<accession>Q96GD0</accession>
<accession>Q9UGY2</accession>
<feature type="chain" id="PRO_0000068837" description="Chronophin">
    <location>
        <begin position="1"/>
        <end position="296"/>
    </location>
</feature>
<feature type="active site" description="Nucleophile" evidence="2 3 15">
    <location>
        <position position="25"/>
    </location>
</feature>
<feature type="active site" description="Proton donor" evidence="11 12 15">
    <location>
        <position position="27"/>
    </location>
</feature>
<feature type="binding site" evidence="3 15">
    <location>
        <position position="25"/>
    </location>
    <ligand>
        <name>Mg(2+)</name>
        <dbReference type="ChEBI" id="CHEBI:18420"/>
    </ligand>
</feature>
<feature type="binding site" evidence="3 15">
    <location>
        <position position="27"/>
    </location>
    <ligand>
        <name>Mg(2+)</name>
        <dbReference type="ChEBI" id="CHEBI:18420"/>
    </ligand>
</feature>
<feature type="binding site" evidence="3 15">
    <location>
        <begin position="58"/>
        <end position="60"/>
    </location>
    <ligand>
        <name>substrate</name>
    </ligand>
</feature>
<feature type="binding site" evidence="3 15">
    <location>
        <position position="182"/>
    </location>
    <ligand>
        <name>substrate</name>
    </ligand>
</feature>
<feature type="binding site" evidence="3 15">
    <location>
        <position position="213"/>
    </location>
    <ligand>
        <name>substrate</name>
    </ligand>
</feature>
<feature type="binding site" evidence="3 15">
    <location>
        <position position="238"/>
    </location>
    <ligand>
        <name>Mg(2+)</name>
        <dbReference type="ChEBI" id="CHEBI:18420"/>
    </ligand>
</feature>
<feature type="mutagenesis site" description="Abolishes protein phosphatase activity." evidence="2">
    <original>D</original>
    <variation>N</variation>
    <location>
        <position position="25"/>
    </location>
</feature>
<feature type="helix" evidence="18">
    <location>
        <begin position="9"/>
        <end position="18"/>
    </location>
</feature>
<feature type="strand" evidence="18">
    <location>
        <begin position="20"/>
        <end position="24"/>
    </location>
</feature>
<feature type="turn" evidence="18">
    <location>
        <begin position="27"/>
        <end position="29"/>
    </location>
</feature>
<feature type="strand" evidence="18">
    <location>
        <begin position="30"/>
        <end position="32"/>
    </location>
</feature>
<feature type="helix" evidence="18">
    <location>
        <begin position="40"/>
        <end position="49"/>
    </location>
</feature>
<feature type="strand" evidence="18">
    <location>
        <begin position="53"/>
        <end position="58"/>
    </location>
</feature>
<feature type="helix" evidence="18">
    <location>
        <begin position="65"/>
        <end position="74"/>
    </location>
</feature>
<feature type="helix" evidence="18">
    <location>
        <begin position="82"/>
        <end position="84"/>
    </location>
</feature>
<feature type="strand" evidence="18">
    <location>
        <begin position="85"/>
        <end position="87"/>
    </location>
</feature>
<feature type="helix" evidence="18">
    <location>
        <begin position="88"/>
        <end position="99"/>
    </location>
</feature>
<feature type="strand" evidence="17">
    <location>
        <begin position="104"/>
        <end position="106"/>
    </location>
</feature>
<feature type="strand" evidence="18">
    <location>
        <begin position="109"/>
        <end position="114"/>
    </location>
</feature>
<feature type="helix" evidence="18">
    <location>
        <begin position="116"/>
        <end position="124"/>
    </location>
</feature>
<feature type="strand" evidence="18">
    <location>
        <begin position="143"/>
        <end position="148"/>
    </location>
</feature>
<feature type="helix" evidence="18">
    <location>
        <begin position="156"/>
        <end position="166"/>
    </location>
</feature>
<feature type="strand" evidence="18">
    <location>
        <begin position="171"/>
        <end position="176"/>
    </location>
</feature>
<feature type="strand" evidence="18">
    <location>
        <begin position="181"/>
        <end position="183"/>
    </location>
</feature>
<feature type="strand" evidence="18">
    <location>
        <begin position="189"/>
        <end position="191"/>
    </location>
</feature>
<feature type="helix" evidence="18">
    <location>
        <begin position="193"/>
        <end position="204"/>
    </location>
</feature>
<feature type="helix" evidence="18">
    <location>
        <begin position="216"/>
        <end position="223"/>
    </location>
</feature>
<feature type="helix" evidence="18">
    <location>
        <begin position="230"/>
        <end position="232"/>
    </location>
</feature>
<feature type="strand" evidence="18">
    <location>
        <begin position="233"/>
        <end position="238"/>
    </location>
</feature>
<feature type="turn" evidence="18">
    <location>
        <begin position="240"/>
        <end position="242"/>
    </location>
</feature>
<feature type="helix" evidence="18">
    <location>
        <begin position="243"/>
        <end position="250"/>
    </location>
</feature>
<feature type="strand" evidence="18">
    <location>
        <begin position="253"/>
        <end position="261"/>
    </location>
</feature>
<feature type="helix" evidence="18">
    <location>
        <begin position="264"/>
        <end position="272"/>
    </location>
</feature>
<feature type="helix" evidence="18">
    <location>
        <begin position="276"/>
        <end position="278"/>
    </location>
</feature>
<feature type="strand" evidence="18">
    <location>
        <begin position="281"/>
        <end position="286"/>
    </location>
</feature>
<feature type="helix" evidence="18">
    <location>
        <begin position="287"/>
        <end position="293"/>
    </location>
</feature>
<proteinExistence type="evidence at protein level"/>
<sequence length="296" mass="31698">MARCERLRGAALRDVLGRAQGVLFDCDGVLWNGERAVPGAPELLERLARAGKAALFVSNNSRRARPELALRFARLGFGGLRAEQLFSSALCAARLLRQRLPGPPDAPGAVFVLGGEGLRAELRAAGLRLAGDPSAGDGAAPRVRAVLVGYDEHFSFAKLREACAHLRDPECLLVATDRDPWHPLSDGSRTPGTGSLAAAVETASGRQALVVGKPSPYMFECITENFSIDPARTLMVGDRLETDILFGHRCGMTTVLTLTGVSRLEEAQAYLAAGQHDLVPHYYVESIADLTEGLED</sequence>
<protein>
    <recommendedName>
        <fullName evidence="7">Chronophin</fullName>
        <ecNumber evidence="2">3.1.3.16</ecNumber>
        <ecNumber evidence="1 5">3.1.3.74</ecNumber>
    </recommendedName>
    <alternativeName>
        <fullName evidence="6">Pyridoxal phosphate phosphatase</fullName>
        <shortName evidence="6">PLP phosphatase</shortName>
    </alternativeName>
</protein>
<name>PLPP_HUMAN</name>
<keyword id="KW-0002">3D-structure</keyword>
<keyword id="KW-0024">Alternative initiation</keyword>
<keyword id="KW-0025">Alternative splicing</keyword>
<keyword id="KW-1003">Cell membrane</keyword>
<keyword id="KW-0966">Cell projection</keyword>
<keyword id="KW-0963">Cytoplasm</keyword>
<keyword id="KW-0206">Cytoskeleton</keyword>
<keyword id="KW-0903">Direct protein sequencing</keyword>
<keyword id="KW-0378">Hydrolase</keyword>
<keyword id="KW-0460">Magnesium</keyword>
<keyword id="KW-0472">Membrane</keyword>
<keyword id="KW-0479">Metal-binding</keyword>
<keyword id="KW-1267">Proteomics identification</keyword>
<keyword id="KW-0663">Pyridoxal phosphate</keyword>
<keyword id="KW-1185">Reference proteome</keyword>
<reference key="1">
    <citation type="journal article" date="2003" name="J. Biol. Chem.">
        <title>Human pyridoxal phosphatase. Molecular cloning, functional expression, and tissue distribution.</title>
        <authorList>
            <person name="Jang Y.M."/>
            <person name="Kim D.W."/>
            <person name="Kang T.-C."/>
            <person name="Won M.H."/>
            <person name="Baek N.-I."/>
            <person name="Moon B.J."/>
            <person name="Choi S.Y."/>
            <person name="Kwon O.-S."/>
        </authorList>
    </citation>
    <scope>NUCLEOTIDE SEQUENCE [MRNA] (ISOFORM CIN)</scope>
    <scope>FUNCTION</scope>
    <scope>CATALYTIC ACTIVITY</scope>
    <scope>BIOPHYSICOCHEMICAL PROPERTIES</scope>
    <scope>HOMODIMERIZATION</scope>
    <scope>COFACTOR</scope>
    <scope>SUBUNIT</scope>
    <scope>TISSUE SPECIFICITY</scope>
    <source>
        <tissue>Brain</tissue>
    </source>
</reference>
<reference key="2">
    <citation type="journal article" date="1999" name="Nature">
        <title>The DNA sequence of human chromosome 22.</title>
        <authorList>
            <person name="Dunham I."/>
            <person name="Hunt A.R."/>
            <person name="Collins J.E."/>
            <person name="Bruskiewich R."/>
            <person name="Beare D.M."/>
            <person name="Clamp M."/>
            <person name="Smink L.J."/>
            <person name="Ainscough R."/>
            <person name="Almeida J.P."/>
            <person name="Babbage A.K."/>
            <person name="Bagguley C."/>
            <person name="Bailey J."/>
            <person name="Barlow K.F."/>
            <person name="Bates K.N."/>
            <person name="Beasley O.P."/>
            <person name="Bird C.P."/>
            <person name="Blakey S.E."/>
            <person name="Bridgeman A.M."/>
            <person name="Buck D."/>
            <person name="Burgess J."/>
            <person name="Burrill W.D."/>
            <person name="Burton J."/>
            <person name="Carder C."/>
            <person name="Carter N.P."/>
            <person name="Chen Y."/>
            <person name="Clark G."/>
            <person name="Clegg S.M."/>
            <person name="Cobley V.E."/>
            <person name="Cole C.G."/>
            <person name="Collier R.E."/>
            <person name="Connor R."/>
            <person name="Conroy D."/>
            <person name="Corby N.R."/>
            <person name="Coville G.J."/>
            <person name="Cox A.V."/>
            <person name="Davis J."/>
            <person name="Dawson E."/>
            <person name="Dhami P.D."/>
            <person name="Dockree C."/>
            <person name="Dodsworth S.J."/>
            <person name="Durbin R.M."/>
            <person name="Ellington A.G."/>
            <person name="Evans K.L."/>
            <person name="Fey J.M."/>
            <person name="Fleming K."/>
            <person name="French L."/>
            <person name="Garner A.A."/>
            <person name="Gilbert J.G.R."/>
            <person name="Goward M.E."/>
            <person name="Grafham D.V."/>
            <person name="Griffiths M.N.D."/>
            <person name="Hall C."/>
            <person name="Hall R.E."/>
            <person name="Hall-Tamlyn G."/>
            <person name="Heathcott R.W."/>
            <person name="Ho S."/>
            <person name="Holmes S."/>
            <person name="Hunt S.E."/>
            <person name="Jones M.C."/>
            <person name="Kershaw J."/>
            <person name="Kimberley A.M."/>
            <person name="King A."/>
            <person name="Laird G.K."/>
            <person name="Langford C.F."/>
            <person name="Leversha M.A."/>
            <person name="Lloyd C."/>
            <person name="Lloyd D.M."/>
            <person name="Martyn I.D."/>
            <person name="Mashreghi-Mohammadi M."/>
            <person name="Matthews L.H."/>
            <person name="Mccann O.T."/>
            <person name="Mcclay J."/>
            <person name="Mclaren S."/>
            <person name="McMurray A.A."/>
            <person name="Milne S.A."/>
            <person name="Mortimore B.J."/>
            <person name="Odell C.N."/>
            <person name="Pavitt R."/>
            <person name="Pearce A.V."/>
            <person name="Pearson D."/>
            <person name="Phillimore B.J.C.T."/>
            <person name="Phillips S.H."/>
            <person name="Plumb R.W."/>
            <person name="Ramsay H."/>
            <person name="Ramsey Y."/>
            <person name="Rogers L."/>
            <person name="Ross M.T."/>
            <person name="Scott C.E."/>
            <person name="Sehra H.K."/>
            <person name="Skuce C.D."/>
            <person name="Smalley S."/>
            <person name="Smith M.L."/>
            <person name="Soderlund C."/>
            <person name="Spragon L."/>
            <person name="Steward C.A."/>
            <person name="Sulston J.E."/>
            <person name="Swann R.M."/>
            <person name="Vaudin M."/>
            <person name="Wall M."/>
            <person name="Wallis J.M."/>
            <person name="Whiteley M.N."/>
            <person name="Willey D.L."/>
            <person name="Williams L."/>
            <person name="Williams S.A."/>
            <person name="Williamson H."/>
            <person name="Wilmer T.E."/>
            <person name="Wilming L."/>
            <person name="Wright C.L."/>
            <person name="Hubbard T."/>
            <person name="Bentley D.R."/>
            <person name="Beck S."/>
            <person name="Rogers J."/>
            <person name="Shimizu N."/>
            <person name="Minoshima S."/>
            <person name="Kawasaki K."/>
            <person name="Sasaki T."/>
            <person name="Asakawa S."/>
            <person name="Kudoh J."/>
            <person name="Shintani A."/>
            <person name="Shibuya K."/>
            <person name="Yoshizaki Y."/>
            <person name="Aoki N."/>
            <person name="Mitsuyama S."/>
            <person name="Roe B.A."/>
            <person name="Chen F."/>
            <person name="Chu L."/>
            <person name="Crabtree J."/>
            <person name="Deschamps S."/>
            <person name="Do A."/>
            <person name="Do T."/>
            <person name="Dorman A."/>
            <person name="Fang F."/>
            <person name="Fu Y."/>
            <person name="Hu P."/>
            <person name="Hua A."/>
            <person name="Kenton S."/>
            <person name="Lai H."/>
            <person name="Lao H.I."/>
            <person name="Lewis J."/>
            <person name="Lewis S."/>
            <person name="Lin S.-P."/>
            <person name="Loh P."/>
            <person name="Malaj E."/>
            <person name="Nguyen T."/>
            <person name="Pan H."/>
            <person name="Phan S."/>
            <person name="Qi S."/>
            <person name="Qian Y."/>
            <person name="Ray L."/>
            <person name="Ren Q."/>
            <person name="Shaull S."/>
            <person name="Sloan D."/>
            <person name="Song L."/>
            <person name="Wang Q."/>
            <person name="Wang Y."/>
            <person name="Wang Z."/>
            <person name="White J."/>
            <person name="Willingham D."/>
            <person name="Wu H."/>
            <person name="Yao Z."/>
            <person name="Zhan M."/>
            <person name="Zhang G."/>
            <person name="Chissoe S."/>
            <person name="Murray J."/>
            <person name="Miller N."/>
            <person name="Minx P."/>
            <person name="Fulton R."/>
            <person name="Johnson D."/>
            <person name="Bemis G."/>
            <person name="Bentley D."/>
            <person name="Bradshaw H."/>
            <person name="Bourne S."/>
            <person name="Cordes M."/>
            <person name="Du Z."/>
            <person name="Fulton L."/>
            <person name="Goela D."/>
            <person name="Graves T."/>
            <person name="Hawkins J."/>
            <person name="Hinds K."/>
            <person name="Kemp K."/>
            <person name="Latreille P."/>
            <person name="Layman D."/>
            <person name="Ozersky P."/>
            <person name="Rohlfing T."/>
            <person name="Scheet P."/>
            <person name="Walker C."/>
            <person name="Wamsley A."/>
            <person name="Wohldmann P."/>
            <person name="Pepin K."/>
            <person name="Nelson J."/>
            <person name="Korf I."/>
            <person name="Bedell J.A."/>
            <person name="Hillier L.W."/>
            <person name="Mardis E."/>
            <person name="Waterston R."/>
            <person name="Wilson R."/>
            <person name="Emanuel B.S."/>
            <person name="Shaikh T."/>
            <person name="Kurahashi H."/>
            <person name="Saitta S."/>
            <person name="Budarf M.L."/>
            <person name="McDermid H.E."/>
            <person name="Johnson A."/>
            <person name="Wong A.C.C."/>
            <person name="Morrow B.E."/>
            <person name="Edelmann L."/>
            <person name="Kim U.J."/>
            <person name="Shizuya H."/>
            <person name="Simon M.I."/>
            <person name="Dumanski J.P."/>
            <person name="Peyrard M."/>
            <person name="Kedra D."/>
            <person name="Seroussi E."/>
            <person name="Fransson I."/>
            <person name="Tapia I."/>
            <person name="Bruder C.E."/>
            <person name="O'Brien K.P."/>
            <person name="Wilkinson P."/>
            <person name="Bodenteich A."/>
            <person name="Hartman K."/>
            <person name="Hu X."/>
            <person name="Khan A.S."/>
            <person name="Lane L."/>
            <person name="Tilahun Y."/>
            <person name="Wright H."/>
        </authorList>
    </citation>
    <scope>NUCLEOTIDE SEQUENCE [LARGE SCALE GENOMIC DNA]</scope>
</reference>
<reference key="3">
    <citation type="journal article" date="2004" name="Genome Res.">
        <title>The status, quality, and expansion of the NIH full-length cDNA project: the Mammalian Gene Collection (MGC).</title>
        <authorList>
            <consortium name="The MGC Project Team"/>
        </authorList>
    </citation>
    <scope>NUCLEOTIDE SEQUENCE [LARGE SCALE MRNA] (ISOFORM CIN)</scope>
    <source>
        <tissue>Eye</tissue>
        <tissue>Lung</tissue>
        <tissue>Placenta</tissue>
    </source>
</reference>
<reference key="4">
    <citation type="submission" date="2008-12" db="UniProtKB">
        <authorList>
            <person name="Lubec G."/>
            <person name="Afjehi-Sadat L."/>
            <person name="Chen W.-Q."/>
            <person name="Sun Y."/>
        </authorList>
    </citation>
    <scope>PROTEIN SEQUENCE OF 19-35; 100-119 AND 145-158 (ISOFORM CIN)</scope>
    <scope>IDENTIFICATION BY MASS SPECTROMETRY</scope>
    <source>
        <tissue>Brain</tissue>
        <tissue>Cajal-Retzius cell</tissue>
        <tissue>Fetal brain cortex</tissue>
    </source>
</reference>
<reference key="5">
    <citation type="journal article" date="1994" name="J. Biol. Chem.">
        <title>Identification of an essential cysteine residue in pyridoxal phosphatase from human erythrocytes.</title>
        <authorList>
            <person name="Gao G.-J."/>
            <person name="Fonda M.L."/>
        </authorList>
    </citation>
    <scope>PROTEIN SEQUENCE OF 19-30 AND 145-158 (ISOFORM CIN)</scope>
    <scope>FUNCTION</scope>
    <scope>CATALYTIC ACTIVITY</scope>
</reference>
<reference key="6">
    <citation type="journal article" date="2005" name="Nat. Cell Biol.">
        <title>Chronophin, a novel HAD-type serine protein phosphatase, regulates cofilin-dependent actin dynamics.</title>
        <authorList>
            <person name="Gohla A."/>
            <person name="Birkenfeld J."/>
            <person name="Bokoch G.M."/>
        </authorList>
    </citation>
    <scope>FUNCTION</scope>
    <scope>CATALYTIC ACTIVITY</scope>
    <scope>ACTIVITY REGULATION</scope>
    <scope>COFACTOR</scope>
    <scope>ACTIVE SITE</scope>
    <scope>SUBCELLULAR LOCATION</scope>
    <scope>MUTAGENESIS OF ASP-25</scope>
    <scope>TISSUE SPECIFICITY</scope>
</reference>
<reference key="7">
    <citation type="journal article" date="2011" name="BMC Syst. Biol.">
        <title>Initial characterization of the human central proteome.</title>
        <authorList>
            <person name="Burkard T.R."/>
            <person name="Planyavsky M."/>
            <person name="Kaupe I."/>
            <person name="Breitwieser F.P."/>
            <person name="Buerckstuemmer T."/>
            <person name="Bennett K.L."/>
            <person name="Superti-Furga G."/>
            <person name="Colinge J."/>
        </authorList>
    </citation>
    <scope>IDENTIFICATION BY MASS SPECTROMETRY [LARGE SCALE ANALYSIS]</scope>
</reference>
<reference key="8">
    <citation type="journal article" date="2013" name="Mol. Biol. Cell">
        <title>A novel Rac1 GAP splice variant relays poly-Ub accumulation signals to mediate Rac1 inactivation.</title>
        <authorList>
            <person name="Huang T.Y."/>
            <person name="Michael S."/>
            <person name="Xu T."/>
            <person name="Sarkeshik A."/>
            <person name="Moresco J.J."/>
            <person name="Yates J.R. III"/>
            <person name="Masliah E."/>
            <person name="Bokoch G.M."/>
            <person name="DerMardirossian C."/>
        </authorList>
    </citation>
    <scope>ALTERNATIVE SPLICING (ISOFORMS CIN; LONG BGIN AND SHORT BGIN)</scope>
    <scope>TISSUE SPECIFICITY</scope>
</reference>
<reference evidence="14 15 16" key="9">
    <citation type="journal article" date="2007" name="J. Struct. Funct. Genomics">
        <title>Structural genomics of protein phosphatases.</title>
        <authorList>
            <person name="Almo S.C."/>
            <person name="Bonanno J.B."/>
            <person name="Sauder J.M."/>
            <person name="Emtage S."/>
            <person name="Dilorenzo T.P."/>
            <person name="Malashkevich V."/>
            <person name="Wasserman S.R."/>
            <person name="Swaminathan S."/>
            <person name="Eswaramoorthy S."/>
            <person name="Agarwal R."/>
            <person name="Kumaran D."/>
            <person name="Madegowda M."/>
            <person name="Ragumani S."/>
            <person name="Patskovsky Y."/>
            <person name="Alvarado J."/>
            <person name="Ramagopal U.A."/>
            <person name="Faber-Barata J."/>
            <person name="Chance M.R."/>
            <person name="Sali A."/>
            <person name="Fiser A."/>
            <person name="Zhang Z.Y."/>
            <person name="Lawrence D.S."/>
            <person name="Burley S.K."/>
        </authorList>
    </citation>
    <scope>X-RAY CRYSTALLOGRAPHY (1.72 ANGSTROMS) OF 2-296 IN COMPLEXES WITH PYRODOXAL PHOSPHATE; CALCIUM AND MAGNESIUM IONS</scope>
</reference>
<organism>
    <name type="scientific">Homo sapiens</name>
    <name type="common">Human</name>
    <dbReference type="NCBI Taxonomy" id="9606"/>
    <lineage>
        <taxon>Eukaryota</taxon>
        <taxon>Metazoa</taxon>
        <taxon>Chordata</taxon>
        <taxon>Craniata</taxon>
        <taxon>Vertebrata</taxon>
        <taxon>Euteleostomi</taxon>
        <taxon>Mammalia</taxon>
        <taxon>Eutheria</taxon>
        <taxon>Euarchontoglires</taxon>
        <taxon>Primates</taxon>
        <taxon>Haplorrhini</taxon>
        <taxon>Catarrhini</taxon>
        <taxon>Hominidae</taxon>
        <taxon>Homo</taxon>
    </lineage>
</organism>
<gene>
    <name evidence="13" type="primary">PDXP</name>
    <name evidence="7" type="synonym">CIN</name>
    <name evidence="6" type="synonym">PLP</name>
    <name evidence="6" type="synonym">PLPP</name>
</gene>
<comment type="function">
    <text evidence="1 2 5">Functions as a pyridoxal phosphate (PLP) phosphatase, which also catalyzes the dephosphorylation of pyridoxine 5'-phosphate (PNP) and pyridoxamine 5'-phosphate (PMP), with order of substrate preference PLP &gt; PNP &gt; PMP and therefore plays a role in vitamin B6 metabolism (PubMed:14522954, PubMed:8132548). Also functions as a protein serine phosphatase that specifically dephosphorylates 'Ser-3' in proteins of the actin-depolymerizing factor (ADF)/cofilin family like CFL1 and DSTN. Thereby, regulates cofilin-dependent actin cytoskeleton reorganization, being required for normal progress through mitosis and normal cytokinesis. Does not dephosphorylate phosphothreonines in LIMK1. Does not dephosphorylate peptides containing phosphotyrosine (PubMed:15580268).</text>
</comment>
<comment type="catalytic activity">
    <reaction evidence="1">
        <text>pyridoxal 5'-phosphate + H2O = pyridoxal + phosphate</text>
        <dbReference type="Rhea" id="RHEA:20533"/>
        <dbReference type="ChEBI" id="CHEBI:15377"/>
        <dbReference type="ChEBI" id="CHEBI:17310"/>
        <dbReference type="ChEBI" id="CHEBI:43474"/>
        <dbReference type="ChEBI" id="CHEBI:597326"/>
        <dbReference type="EC" id="3.1.3.74"/>
    </reaction>
    <physiologicalReaction direction="left-to-right" evidence="10">
        <dbReference type="Rhea" id="RHEA:20534"/>
    </physiologicalReaction>
</comment>
<comment type="catalytic activity">
    <reaction evidence="1 5">
        <text>pyridoxine 5'-phosphate + H2O = pyridoxine + phosphate</text>
        <dbReference type="Rhea" id="RHEA:25112"/>
        <dbReference type="ChEBI" id="CHEBI:15377"/>
        <dbReference type="ChEBI" id="CHEBI:16709"/>
        <dbReference type="ChEBI" id="CHEBI:43474"/>
        <dbReference type="ChEBI" id="CHEBI:58589"/>
        <dbReference type="EC" id="3.1.3.74"/>
    </reaction>
    <physiologicalReaction direction="left-to-right" evidence="10">
        <dbReference type="Rhea" id="RHEA:25113"/>
    </physiologicalReaction>
</comment>
<comment type="catalytic activity">
    <reaction evidence="1">
        <text>pyridoxamine + phosphate = pyridoxamine 5'-phosphate + H2O</text>
        <dbReference type="Rhea" id="RHEA:25135"/>
        <dbReference type="ChEBI" id="CHEBI:15377"/>
        <dbReference type="ChEBI" id="CHEBI:43474"/>
        <dbReference type="ChEBI" id="CHEBI:57761"/>
        <dbReference type="ChEBI" id="CHEBI:58451"/>
        <dbReference type="EC" id="3.1.3.74"/>
    </reaction>
    <physiologicalReaction direction="right-to-left" evidence="10">
        <dbReference type="Rhea" id="RHEA:25137"/>
    </physiologicalReaction>
</comment>
<comment type="catalytic activity">
    <reaction evidence="2">
        <text>O-phospho-L-seryl-[protein] + H2O = L-seryl-[protein] + phosphate</text>
        <dbReference type="Rhea" id="RHEA:20629"/>
        <dbReference type="Rhea" id="RHEA-COMP:9863"/>
        <dbReference type="Rhea" id="RHEA-COMP:11604"/>
        <dbReference type="ChEBI" id="CHEBI:15377"/>
        <dbReference type="ChEBI" id="CHEBI:29999"/>
        <dbReference type="ChEBI" id="CHEBI:43474"/>
        <dbReference type="ChEBI" id="CHEBI:83421"/>
        <dbReference type="EC" id="3.1.3.16"/>
    </reaction>
    <physiologicalReaction direction="left-to-right" evidence="2">
        <dbReference type="Rhea" id="RHEA:20630"/>
    </physiologicalReaction>
</comment>
<comment type="cofactor">
    <cofactor evidence="1 2">
        <name>Mg(2+)</name>
        <dbReference type="ChEBI" id="CHEBI:18420"/>
    </cofactor>
    <text evidence="1 2">Divalent metal ions. Mg(2+) is the most effective.</text>
</comment>
<comment type="activity regulation">
    <text evidence="2">Inhibited by NaF, Zn(2+), Ca(2+), Mn(2+) and EDTA.</text>
</comment>
<comment type="biophysicochemical properties">
    <kinetics>
        <KM evidence="1">2.5 uM for pyridoxal 5'-phosphate (at pH 7.4 and 37 degrees Celsius)</KM>
        <KM evidence="1">43.4 uM for pyridoxine 5'-phosphate (at pH 7.4 and 37 degrees Celsius)</KM>
        <KM evidence="1">80.6 uM for pyridoxamine 5'-phosphate (at pH 7.4 and 37 degrees Celsius)</KM>
        <Vmax evidence="1">1.42 umol/min/mg enzyme with pyridoxal 5'-phosphate as substrate</Vmax>
        <Vmax evidence="1">1.17 umol/min/mg enzyme with pyridoxine 5'-phosphate as substrate</Vmax>
        <Vmax evidence="1">0.42 umol/min/mg enzyme with pyridoxamine 5'-phosphate as substrate</Vmax>
        <text evidence="1">kcat is 1.52 sec(-1) for the dephosphorylation of pyridoxal 5'-phosphate (at pH 7.4 and 37 degrees Celsius). kcat is 1.25 sec(-1) for the dephosphorylation of pyridoxine 5'-phosphate (at pH 7.4 and 37 degrees Celsius). kcat is 0.45 sec(-1) for the dephosphorylation of pyridoxamine 5'-phosphate (at pH 7.4 and 37 degrees Celsius).</text>
    </kinetics>
</comment>
<comment type="subunit">
    <text evidence="1">Homodimer.</text>
</comment>
<comment type="interaction">
    <interactant intactId="EBI-4303060">
        <id>Q96GD0</id>
    </interactant>
    <interactant intactId="EBI-4303019">
        <id>P29066</id>
        <label>Arrb1</label>
    </interactant>
    <organismsDiffer>true</organismsDiffer>
    <experiments>2</experiments>
</comment>
<comment type="subcellular location">
    <subcellularLocation>
        <location evidence="2">Cytoplasm</location>
        <location evidence="2">Cytosol</location>
    </subcellularLocation>
    <subcellularLocation>
        <location evidence="2">Cytoplasm</location>
        <location evidence="2">Cytoskeleton</location>
    </subcellularLocation>
    <subcellularLocation>
        <location evidence="2">Cell projection</location>
        <location evidence="2">Ruffle membrane</location>
        <topology evidence="2">Peripheral membrane protein</topology>
        <orientation evidence="2">Cytoplasmic side</orientation>
    </subcellularLocation>
    <subcellularLocation>
        <location evidence="2">Cell projection</location>
        <location evidence="2">Lamellipodium membrane</location>
        <topology evidence="2">Peripheral membrane protein</topology>
        <orientation evidence="2">Cytoplasmic side</orientation>
    </subcellularLocation>
    <subcellularLocation>
        <location evidence="2">Cell membrane</location>
        <topology evidence="2">Peripheral membrane protein</topology>
        <orientation evidence="2">Cytoplasmic side</orientation>
    </subcellularLocation>
    <text evidence="2">Colocalizes with the actin cytoskeleton in membrane ruffles and lamellipodia. Diffusely distributed throughout the cytosol during pro-metaphase and metaphase. Detected at the dynamic cell poles during telophase. Detected at the cleavage furrow and contractile ring during cytokinesis. Transiently detected at the plasma membrane in late stages of cytokinesis. Detected at the midbody.</text>
</comment>
<comment type="alternative products">
    <event type="alternative splicing"/>
    <event type="alternative initiation"/>
    <isoform>
        <id>Q96GD0-1</id>
        <name evidence="8">CIN</name>
        <sequence type="displayed"/>
    </isoform>
    <isoform>
        <id>Q6ZT62-1</id>
        <name evidence="8">Long BGIN</name>
        <sequence type="external"/>
    </isoform>
    <isoform>
        <id>Q6ZT62-2</id>
        <name evidence="8">Short BGIN</name>
        <sequence type="external"/>
    </isoform>
</comment>
<comment type="tissue specificity">
    <text evidence="1 2 4">Ubiquitously expressed (at protein level) (PubMed:23223568). Highly expressed in all the regions of central nerve system except the spinal cord. Also expressed at high level in liver and testis. In fetus, it is weakly expressed in all organs except brain (PubMed:14522954, PubMed:15580268).</text>
</comment>
<comment type="similarity">
    <text evidence="9">Belongs to the HAD-like hydrolase superfamily.</text>
</comment>
<dbReference type="EC" id="3.1.3.16" evidence="2"/>
<dbReference type="EC" id="3.1.3.74" evidence="1 5"/>
<dbReference type="EMBL" id="AY125047">
    <property type="protein sequence ID" value="AAM94358.1"/>
    <property type="molecule type" value="mRNA"/>
</dbReference>
<dbReference type="EMBL" id="Z83844">
    <property type="status" value="NOT_ANNOTATED_CDS"/>
    <property type="molecule type" value="Genomic_DNA"/>
</dbReference>
<dbReference type="EMBL" id="BC000320">
    <property type="protein sequence ID" value="AAH00320.1"/>
    <property type="molecule type" value="mRNA"/>
</dbReference>
<dbReference type="EMBL" id="BC009756">
    <property type="protein sequence ID" value="AAH09756.2"/>
    <property type="molecule type" value="mRNA"/>
</dbReference>
<dbReference type="EMBL" id="BC064922">
    <property type="protein sequence ID" value="AAH64922.1"/>
    <property type="molecule type" value="mRNA"/>
</dbReference>
<dbReference type="CCDS" id="CCDS13953.1">
    <molecule id="Q96GD0-1"/>
</dbReference>
<dbReference type="RefSeq" id="NP_064711.1">
    <molecule id="Q96GD0-1"/>
    <property type="nucleotide sequence ID" value="NM_020315.5"/>
</dbReference>
<dbReference type="PDB" id="2CFR">
    <property type="method" value="X-ray"/>
    <property type="resolution" value="2.40 A"/>
    <property type="chains" value="A=1-296"/>
</dbReference>
<dbReference type="PDB" id="2CFS">
    <property type="method" value="X-ray"/>
    <property type="resolution" value="2.40 A"/>
    <property type="chains" value="A=1-296"/>
</dbReference>
<dbReference type="PDB" id="2CFT">
    <property type="method" value="X-ray"/>
    <property type="resolution" value="1.80 A"/>
    <property type="chains" value="A=1-296"/>
</dbReference>
<dbReference type="PDB" id="2OYC">
    <property type="method" value="X-ray"/>
    <property type="resolution" value="1.72 A"/>
    <property type="chains" value="A=2-296"/>
</dbReference>
<dbReference type="PDB" id="2P27">
    <property type="method" value="X-ray"/>
    <property type="resolution" value="1.90 A"/>
    <property type="chains" value="A=2-296"/>
</dbReference>
<dbReference type="PDB" id="2P69">
    <property type="method" value="X-ray"/>
    <property type="resolution" value="2.25 A"/>
    <property type="chains" value="A=2-296"/>
</dbReference>
<dbReference type="PDB" id="5GYN">
    <property type="method" value="X-ray"/>
    <property type="resolution" value="2.00 A"/>
    <property type="chains" value="A=1-296"/>
</dbReference>
<dbReference type="PDB" id="8S8A">
    <property type="method" value="X-ray"/>
    <property type="resolution" value="1.50 A"/>
    <property type="chains" value="A=1-296"/>
</dbReference>
<dbReference type="PDB" id="9EM1">
    <property type="method" value="X-ray"/>
    <property type="resolution" value="1.50 A"/>
    <property type="chains" value="A=1-296"/>
</dbReference>
<dbReference type="PDBsum" id="2CFR"/>
<dbReference type="PDBsum" id="2CFS"/>
<dbReference type="PDBsum" id="2CFT"/>
<dbReference type="PDBsum" id="2OYC"/>
<dbReference type="PDBsum" id="2P27"/>
<dbReference type="PDBsum" id="2P69"/>
<dbReference type="PDBsum" id="5GYN"/>
<dbReference type="PDBsum" id="8S8A"/>
<dbReference type="PDBsum" id="9EM1"/>
<dbReference type="SMR" id="Q96GD0"/>
<dbReference type="BioGRID" id="121330">
    <property type="interactions" value="31"/>
</dbReference>
<dbReference type="FunCoup" id="Q96GD0">
    <property type="interactions" value="220"/>
</dbReference>
<dbReference type="IntAct" id="Q96GD0">
    <property type="interactions" value="21"/>
</dbReference>
<dbReference type="MINT" id="Q96GD0"/>
<dbReference type="STRING" id="9606.ENSP00000215904"/>
<dbReference type="DrugBank" id="DB00114">
    <property type="generic name" value="Pyridoxal phosphate"/>
</dbReference>
<dbReference type="DrugBank" id="DB00165">
    <property type="generic name" value="Pyridoxine"/>
</dbReference>
<dbReference type="DrugCentral" id="Q96GD0"/>
<dbReference type="DEPOD" id="PDXP"/>
<dbReference type="GlyGen" id="Q96GD0">
    <property type="glycosylation" value="1 site"/>
</dbReference>
<dbReference type="iPTMnet" id="Q96GD0"/>
<dbReference type="PhosphoSitePlus" id="Q96GD0"/>
<dbReference type="SwissPalm" id="Q96GD0"/>
<dbReference type="BioMuta" id="PDXP"/>
<dbReference type="DMDM" id="44888310"/>
<dbReference type="REPRODUCTION-2DPAGE" id="IPI00025340"/>
<dbReference type="jPOST" id="Q96GD0"/>
<dbReference type="MassIVE" id="Q96GD0"/>
<dbReference type="PaxDb" id="9606-ENSP00000215904"/>
<dbReference type="PeptideAtlas" id="Q96GD0"/>
<dbReference type="ProteomicsDB" id="76616"/>
<dbReference type="Pumba" id="Q96GD0"/>
<dbReference type="Antibodypedia" id="34919">
    <property type="antibodies" value="110 antibodies from 26 providers"/>
</dbReference>
<dbReference type="DNASU" id="57026"/>
<dbReference type="Ensembl" id="ENST00000215904.7">
    <molecule id="Q96GD0-1"/>
    <property type="protein sequence ID" value="ENSP00000215904.6"/>
    <property type="gene ID" value="ENSG00000241360.2"/>
</dbReference>
<dbReference type="GeneID" id="57026"/>
<dbReference type="KEGG" id="hsa:57026"/>
<dbReference type="MANE-Select" id="ENST00000215904.7">
    <property type="protein sequence ID" value="ENSP00000215904.6"/>
    <property type="RefSeq nucleotide sequence ID" value="NM_020315.5"/>
    <property type="RefSeq protein sequence ID" value="NP_064711.1"/>
</dbReference>
<dbReference type="UCSC" id="uc003atm.2">
    <molecule id="Q96GD0-1"/>
    <property type="organism name" value="human"/>
</dbReference>
<dbReference type="AGR" id="HGNC:30259"/>
<dbReference type="CTD" id="57026"/>
<dbReference type="DisGeNET" id="57026"/>
<dbReference type="GeneCards" id="PDXP"/>
<dbReference type="HGNC" id="HGNC:30259">
    <property type="gene designation" value="PDXP"/>
</dbReference>
<dbReference type="HPA" id="ENSG00000241360">
    <property type="expression patterns" value="Group enriched (brain, liver)"/>
</dbReference>
<dbReference type="MIM" id="609246">
    <property type="type" value="gene"/>
</dbReference>
<dbReference type="neXtProt" id="NX_Q96GD0"/>
<dbReference type="OpenTargets" id="ENSG00000241360"/>
<dbReference type="PharmGKB" id="PA134882132"/>
<dbReference type="VEuPathDB" id="HostDB:ENSG00000241360"/>
<dbReference type="eggNOG" id="KOG2882">
    <property type="taxonomic scope" value="Eukaryota"/>
</dbReference>
<dbReference type="GeneTree" id="ENSGT00940000162045"/>
<dbReference type="HOGENOM" id="CLU_043473_0_1_1"/>
<dbReference type="InParanoid" id="Q96GD0"/>
<dbReference type="OMA" id="AGLDFHI"/>
<dbReference type="OrthoDB" id="413953at2759"/>
<dbReference type="PAN-GO" id="Q96GD0">
    <property type="GO annotations" value="3 GO annotations based on evolutionary models"/>
</dbReference>
<dbReference type="PhylomeDB" id="Q96GD0"/>
<dbReference type="TreeFam" id="TF314344"/>
<dbReference type="BRENDA" id="3.1.3.74">
    <property type="organism ID" value="2681"/>
</dbReference>
<dbReference type="PathwayCommons" id="Q96GD0"/>
<dbReference type="SABIO-RK" id="Q96GD0"/>
<dbReference type="SignaLink" id="Q96GD0"/>
<dbReference type="SIGNOR" id="Q96GD0"/>
<dbReference type="BioGRID-ORCS" id="57026">
    <property type="hits" value="10 hits in 1172 CRISPR screens"/>
</dbReference>
<dbReference type="ChiTaRS" id="PDXP">
    <property type="organism name" value="human"/>
</dbReference>
<dbReference type="EvolutionaryTrace" id="Q96GD0"/>
<dbReference type="GenomeRNAi" id="57026"/>
<dbReference type="Pharos" id="Q96GD0">
    <property type="development level" value="Tbio"/>
</dbReference>
<dbReference type="PRO" id="PR:Q96GD0"/>
<dbReference type="Proteomes" id="UP000005640">
    <property type="component" value="Chromosome 22"/>
</dbReference>
<dbReference type="RNAct" id="Q96GD0">
    <property type="molecule type" value="protein"/>
</dbReference>
<dbReference type="Bgee" id="ENSG00000241360">
    <property type="expression patterns" value="Expressed in right frontal lobe and 97 other cell types or tissues"/>
</dbReference>
<dbReference type="ExpressionAtlas" id="Q96GD0">
    <property type="expression patterns" value="baseline and differential"/>
</dbReference>
<dbReference type="GO" id="GO:0005911">
    <property type="term" value="C:cell-cell junction"/>
    <property type="evidence" value="ECO:0007669"/>
    <property type="project" value="Ensembl"/>
</dbReference>
<dbReference type="GO" id="GO:0005737">
    <property type="term" value="C:cytoplasm"/>
    <property type="evidence" value="ECO:0000318"/>
    <property type="project" value="GO_Central"/>
</dbReference>
<dbReference type="GO" id="GO:0005856">
    <property type="term" value="C:cytoskeleton"/>
    <property type="evidence" value="ECO:0007669"/>
    <property type="project" value="UniProtKB-SubCell"/>
</dbReference>
<dbReference type="GO" id="GO:0005829">
    <property type="term" value="C:cytosol"/>
    <property type="evidence" value="ECO:0000314"/>
    <property type="project" value="UniProtKB"/>
</dbReference>
<dbReference type="GO" id="GO:0098978">
    <property type="term" value="C:glutamatergic synapse"/>
    <property type="evidence" value="ECO:0007669"/>
    <property type="project" value="Ensembl"/>
</dbReference>
<dbReference type="GO" id="GO:0031258">
    <property type="term" value="C:lamellipodium membrane"/>
    <property type="evidence" value="ECO:0007669"/>
    <property type="project" value="UniProtKB-SubCell"/>
</dbReference>
<dbReference type="GO" id="GO:0098794">
    <property type="term" value="C:postsynapse"/>
    <property type="evidence" value="ECO:0007669"/>
    <property type="project" value="Ensembl"/>
</dbReference>
<dbReference type="GO" id="GO:0032587">
    <property type="term" value="C:ruffle membrane"/>
    <property type="evidence" value="ECO:0007669"/>
    <property type="project" value="UniProtKB-SubCell"/>
</dbReference>
<dbReference type="GO" id="GO:0031072">
    <property type="term" value="F:heat shock protein binding"/>
    <property type="evidence" value="ECO:0000314"/>
    <property type="project" value="MGI"/>
</dbReference>
<dbReference type="GO" id="GO:0000287">
    <property type="term" value="F:magnesium ion binding"/>
    <property type="evidence" value="ECO:0000250"/>
    <property type="project" value="UniProtKB"/>
</dbReference>
<dbReference type="GO" id="GO:0004721">
    <property type="term" value="F:phosphoprotein phosphatase activity"/>
    <property type="evidence" value="ECO:0000314"/>
    <property type="project" value="UniProtKB"/>
</dbReference>
<dbReference type="GO" id="GO:0042803">
    <property type="term" value="F:protein homodimerization activity"/>
    <property type="evidence" value="ECO:0007669"/>
    <property type="project" value="Ensembl"/>
</dbReference>
<dbReference type="GO" id="GO:0004722">
    <property type="term" value="F:protein serine/threonine phosphatase activity"/>
    <property type="evidence" value="ECO:0007669"/>
    <property type="project" value="UniProtKB-EC"/>
</dbReference>
<dbReference type="GO" id="GO:0033883">
    <property type="term" value="F:pyridoxal phosphatase activity"/>
    <property type="evidence" value="ECO:0000314"/>
    <property type="project" value="UniProtKB"/>
</dbReference>
<dbReference type="GO" id="GO:0031247">
    <property type="term" value="P:actin rod assembly"/>
    <property type="evidence" value="ECO:0000314"/>
    <property type="project" value="MGI"/>
</dbReference>
<dbReference type="GO" id="GO:0071318">
    <property type="term" value="P:cellular response to ATP"/>
    <property type="evidence" value="ECO:0000314"/>
    <property type="project" value="MGI"/>
</dbReference>
<dbReference type="GO" id="GO:0016311">
    <property type="term" value="P:dephosphorylation"/>
    <property type="evidence" value="ECO:0000314"/>
    <property type="project" value="UniProtKB"/>
</dbReference>
<dbReference type="GO" id="GO:0030836">
    <property type="term" value="P:positive regulation of actin filament depolymerization"/>
    <property type="evidence" value="ECO:0000315"/>
    <property type="project" value="UniProtKB"/>
</dbReference>
<dbReference type="GO" id="GO:0006470">
    <property type="term" value="P:protein dephosphorylation"/>
    <property type="evidence" value="ECO:0000314"/>
    <property type="project" value="UniProtKB"/>
</dbReference>
<dbReference type="GO" id="GO:0032361">
    <property type="term" value="P:pyridoxal phosphate catabolic process"/>
    <property type="evidence" value="ECO:0000314"/>
    <property type="project" value="UniProtKB"/>
</dbReference>
<dbReference type="GO" id="GO:0032465">
    <property type="term" value="P:regulation of cytokinesis"/>
    <property type="evidence" value="ECO:0000315"/>
    <property type="project" value="UniProtKB"/>
</dbReference>
<dbReference type="GO" id="GO:0007088">
    <property type="term" value="P:regulation of mitotic nuclear division"/>
    <property type="evidence" value="ECO:0000315"/>
    <property type="project" value="UniProtKB"/>
</dbReference>
<dbReference type="GO" id="GO:0099159">
    <property type="term" value="P:regulation of modification of postsynaptic structure"/>
    <property type="evidence" value="ECO:0007669"/>
    <property type="project" value="Ensembl"/>
</dbReference>
<dbReference type="CDD" id="cd07510">
    <property type="entry name" value="HAD_Pase_UmpH-like"/>
    <property type="match status" value="1"/>
</dbReference>
<dbReference type="FunFam" id="3.40.50.1000:FF:000140">
    <property type="entry name" value="Pyridoxal phosphate phosphatase"/>
    <property type="match status" value="1"/>
</dbReference>
<dbReference type="FunFam" id="3.40.50.1000:FF:000163">
    <property type="entry name" value="Pyridoxal phosphate phosphatase"/>
    <property type="match status" value="1"/>
</dbReference>
<dbReference type="Gene3D" id="3.40.50.1000">
    <property type="entry name" value="HAD superfamily/HAD-like"/>
    <property type="match status" value="2"/>
</dbReference>
<dbReference type="InterPro" id="IPR036412">
    <property type="entry name" value="HAD-like_sf"/>
</dbReference>
<dbReference type="InterPro" id="IPR006357">
    <property type="entry name" value="HAD-SF_hydro_IIA"/>
</dbReference>
<dbReference type="InterPro" id="IPR023214">
    <property type="entry name" value="HAD_sf"/>
</dbReference>
<dbReference type="InterPro" id="IPR006349">
    <property type="entry name" value="PGP_euk"/>
</dbReference>
<dbReference type="NCBIfam" id="TIGR01460">
    <property type="entry name" value="HAD-SF-IIA"/>
    <property type="match status" value="1"/>
</dbReference>
<dbReference type="NCBIfam" id="TIGR01452">
    <property type="entry name" value="PGP_euk"/>
    <property type="match status" value="1"/>
</dbReference>
<dbReference type="PANTHER" id="PTHR19288">
    <property type="entry name" value="4-NITROPHENYLPHOSPHATASE-RELATED"/>
    <property type="match status" value="1"/>
</dbReference>
<dbReference type="PANTHER" id="PTHR19288:SF94">
    <property type="entry name" value="CHRONOPHIN"/>
    <property type="match status" value="1"/>
</dbReference>
<dbReference type="Pfam" id="PF13344">
    <property type="entry name" value="Hydrolase_6"/>
    <property type="match status" value="1"/>
</dbReference>
<dbReference type="Pfam" id="PF13242">
    <property type="entry name" value="Hydrolase_like"/>
    <property type="match status" value="1"/>
</dbReference>
<dbReference type="PIRSF" id="PIRSF000915">
    <property type="entry name" value="PGP-type_phosphatase"/>
    <property type="match status" value="1"/>
</dbReference>
<dbReference type="SFLD" id="SFLDG01139">
    <property type="entry name" value="C2.A:_Pyridoxal_Phosphate_Phos"/>
    <property type="match status" value="1"/>
</dbReference>
<dbReference type="SFLD" id="SFLDS00003">
    <property type="entry name" value="Haloacid_Dehalogenase"/>
    <property type="match status" value="1"/>
</dbReference>
<dbReference type="SUPFAM" id="SSF56784">
    <property type="entry name" value="HAD-like"/>
    <property type="match status" value="1"/>
</dbReference>
<evidence type="ECO:0000269" key="1">
    <source>
    </source>
</evidence>
<evidence type="ECO:0000269" key="2">
    <source>
    </source>
</evidence>
<evidence type="ECO:0000269" key="3">
    <source>
    </source>
</evidence>
<evidence type="ECO:0000269" key="4">
    <source>
    </source>
</evidence>
<evidence type="ECO:0000269" key="5">
    <source>
    </source>
</evidence>
<evidence type="ECO:0000303" key="6">
    <source>
    </source>
</evidence>
<evidence type="ECO:0000303" key="7">
    <source>
    </source>
</evidence>
<evidence type="ECO:0000303" key="8">
    <source>
    </source>
</evidence>
<evidence type="ECO:0000305" key="9"/>
<evidence type="ECO:0000305" key="10">
    <source>
    </source>
</evidence>
<evidence type="ECO:0000305" key="11">
    <source>
    </source>
</evidence>
<evidence type="ECO:0000305" key="12">
    <source>
    </source>
</evidence>
<evidence type="ECO:0000312" key="13">
    <source>
        <dbReference type="HGNC" id="HGNC:30259"/>
    </source>
</evidence>
<evidence type="ECO:0007744" key="14">
    <source>
        <dbReference type="PDB" id="2OYC"/>
    </source>
</evidence>
<evidence type="ECO:0007744" key="15">
    <source>
        <dbReference type="PDB" id="2P27"/>
    </source>
</evidence>
<evidence type="ECO:0007744" key="16">
    <source>
        <dbReference type="PDB" id="2P69"/>
    </source>
</evidence>
<evidence type="ECO:0007829" key="17">
    <source>
        <dbReference type="PDB" id="2OYC"/>
    </source>
</evidence>
<evidence type="ECO:0007829" key="18">
    <source>
        <dbReference type="PDB" id="8S8A"/>
    </source>
</evidence>